<comment type="function">
    <text evidence="1">Catalyzes the hydrolysis of esters.</text>
</comment>
<comment type="catalytic activity">
    <reaction evidence="1">
        <text>a carboxylic ester + H2O = an alcohol + a carboxylate + H(+)</text>
        <dbReference type="Rhea" id="RHEA:21164"/>
        <dbReference type="ChEBI" id="CHEBI:15377"/>
        <dbReference type="ChEBI" id="CHEBI:15378"/>
        <dbReference type="ChEBI" id="CHEBI:29067"/>
        <dbReference type="ChEBI" id="CHEBI:30879"/>
        <dbReference type="ChEBI" id="CHEBI:33308"/>
        <dbReference type="EC" id="3.1.1.1"/>
    </reaction>
</comment>
<comment type="similarity">
    <text evidence="1">Belongs to the FrsA family.</text>
</comment>
<organism>
    <name type="scientific">Shigella boydii serotype 4 (strain Sb227)</name>
    <dbReference type="NCBI Taxonomy" id="300268"/>
    <lineage>
        <taxon>Bacteria</taxon>
        <taxon>Pseudomonadati</taxon>
        <taxon>Pseudomonadota</taxon>
        <taxon>Gammaproteobacteria</taxon>
        <taxon>Enterobacterales</taxon>
        <taxon>Enterobacteriaceae</taxon>
        <taxon>Shigella</taxon>
    </lineage>
</organism>
<proteinExistence type="inferred from homology"/>
<accession>Q325P7</accession>
<gene>
    <name evidence="1" type="primary">frsA</name>
    <name type="ordered locus">SBO_0245</name>
</gene>
<feature type="chain" id="PRO_1000064488" description="Esterase FrsA">
    <location>
        <begin position="1"/>
        <end position="414"/>
    </location>
</feature>
<name>FRSA_SHIBS</name>
<dbReference type="EC" id="3.1.1.1" evidence="1"/>
<dbReference type="EMBL" id="CP000036">
    <property type="protein sequence ID" value="ABB64961.1"/>
    <property type="molecule type" value="Genomic_DNA"/>
</dbReference>
<dbReference type="RefSeq" id="WP_000189552.1">
    <property type="nucleotide sequence ID" value="NC_007613.1"/>
</dbReference>
<dbReference type="SMR" id="Q325P7"/>
<dbReference type="ESTHER" id="shifl-yafa">
    <property type="family name" value="Duf_1100-R"/>
</dbReference>
<dbReference type="KEGG" id="sbo:SBO_0245"/>
<dbReference type="HOGENOM" id="CLU_036819_0_0_6"/>
<dbReference type="Proteomes" id="UP000007067">
    <property type="component" value="Chromosome"/>
</dbReference>
<dbReference type="GO" id="GO:0106435">
    <property type="term" value="F:carboxylesterase activity"/>
    <property type="evidence" value="ECO:0007669"/>
    <property type="project" value="UniProtKB-EC"/>
</dbReference>
<dbReference type="FunFam" id="3.40.50.1820:FF:000022">
    <property type="entry name" value="Esterase FrsA"/>
    <property type="match status" value="1"/>
</dbReference>
<dbReference type="Gene3D" id="3.40.50.1820">
    <property type="entry name" value="alpha/beta hydrolase"/>
    <property type="match status" value="1"/>
</dbReference>
<dbReference type="HAMAP" id="MF_01063">
    <property type="entry name" value="FrsA"/>
    <property type="match status" value="1"/>
</dbReference>
<dbReference type="InterPro" id="IPR029058">
    <property type="entry name" value="AB_hydrolase_fold"/>
</dbReference>
<dbReference type="InterPro" id="IPR043423">
    <property type="entry name" value="FrsA"/>
</dbReference>
<dbReference type="InterPro" id="IPR010520">
    <property type="entry name" value="FrsA-like"/>
</dbReference>
<dbReference type="InterPro" id="IPR050261">
    <property type="entry name" value="FrsA_esterase"/>
</dbReference>
<dbReference type="NCBIfam" id="NF003460">
    <property type="entry name" value="PRK05077.1"/>
    <property type="match status" value="1"/>
</dbReference>
<dbReference type="PANTHER" id="PTHR22946">
    <property type="entry name" value="DIENELACTONE HYDROLASE DOMAIN-CONTAINING PROTEIN-RELATED"/>
    <property type="match status" value="1"/>
</dbReference>
<dbReference type="PANTHER" id="PTHR22946:SF4">
    <property type="entry name" value="ESTERASE FRSA"/>
    <property type="match status" value="1"/>
</dbReference>
<dbReference type="Pfam" id="PF06500">
    <property type="entry name" value="FrsA-like"/>
    <property type="match status" value="1"/>
</dbReference>
<dbReference type="SUPFAM" id="SSF53474">
    <property type="entry name" value="alpha/beta-Hydrolases"/>
    <property type="match status" value="1"/>
</dbReference>
<protein>
    <recommendedName>
        <fullName evidence="1">Esterase FrsA</fullName>
        <ecNumber evidence="1">3.1.1.1</ecNumber>
    </recommendedName>
</protein>
<keyword id="KW-0378">Hydrolase</keyword>
<keyword id="KW-0719">Serine esterase</keyword>
<evidence type="ECO:0000255" key="1">
    <source>
        <dbReference type="HAMAP-Rule" id="MF_01063"/>
    </source>
</evidence>
<sequence>MTQANLSETLFKPRFKHPETSTLVRRFNHGAQPPVQSALDGKTIPHWYRMINRLMWIWRGIDPREILDVQARIVMSDAERTDDDLYDTVIGYRGGNWIYEWATQAMVWQQKACAEEDPQLSGRHWLHAATLYNIAAYPHLKGDDLAEQAQALSNRAYEEAAQRLPGTMRQMEFTVPGGAPITGFLHMPKGDGPFPTVLMCGGLDAMQTDYYSLYERYFAPRGIVMLTIDMPSVGFSSKWKLTQDSSLLHQHVLKALPNVPWVDHTRVAAFGFRFGANVAVRLAYLESPRLKAVACLGPVVHTLLSDFKCQQQVPEMYLDVLASRLGMHDASDEALRVELNRYSLKVQGLLGRRCPTPMLSGYWKNDPFSPEEDSRLITSSSADGKLLEIPFNPVYRNFDKGLQEITGWIEKRLC</sequence>
<reference key="1">
    <citation type="journal article" date="2005" name="Nucleic Acids Res.">
        <title>Genome dynamics and diversity of Shigella species, the etiologic agents of bacillary dysentery.</title>
        <authorList>
            <person name="Yang F."/>
            <person name="Yang J."/>
            <person name="Zhang X."/>
            <person name="Chen L."/>
            <person name="Jiang Y."/>
            <person name="Yan Y."/>
            <person name="Tang X."/>
            <person name="Wang J."/>
            <person name="Xiong Z."/>
            <person name="Dong J."/>
            <person name="Xue Y."/>
            <person name="Zhu Y."/>
            <person name="Xu X."/>
            <person name="Sun L."/>
            <person name="Chen S."/>
            <person name="Nie H."/>
            <person name="Peng J."/>
            <person name="Xu J."/>
            <person name="Wang Y."/>
            <person name="Yuan Z."/>
            <person name="Wen Y."/>
            <person name="Yao Z."/>
            <person name="Shen Y."/>
            <person name="Qiang B."/>
            <person name="Hou Y."/>
            <person name="Yu J."/>
            <person name="Jin Q."/>
        </authorList>
    </citation>
    <scope>NUCLEOTIDE SEQUENCE [LARGE SCALE GENOMIC DNA]</scope>
    <source>
        <strain>Sb227</strain>
    </source>
</reference>